<evidence type="ECO:0000255" key="1">
    <source>
        <dbReference type="HAMAP-Rule" id="MF_01342"/>
    </source>
</evidence>
<evidence type="ECO:0000305" key="2"/>
<organism>
    <name type="scientific">Shewanella denitrificans (strain OS217 / ATCC BAA-1090 / DSM 15013)</name>
    <dbReference type="NCBI Taxonomy" id="318161"/>
    <lineage>
        <taxon>Bacteria</taxon>
        <taxon>Pseudomonadati</taxon>
        <taxon>Pseudomonadota</taxon>
        <taxon>Gammaproteobacteria</taxon>
        <taxon>Alteromonadales</taxon>
        <taxon>Shewanellaceae</taxon>
        <taxon>Shewanella</taxon>
    </lineage>
</organism>
<reference key="1">
    <citation type="submission" date="2006-03" db="EMBL/GenBank/DDBJ databases">
        <title>Complete sequence of Shewanella denitrificans OS217.</title>
        <authorList>
            <consortium name="US DOE Joint Genome Institute"/>
            <person name="Copeland A."/>
            <person name="Lucas S."/>
            <person name="Lapidus A."/>
            <person name="Barry K."/>
            <person name="Detter J.C."/>
            <person name="Glavina del Rio T."/>
            <person name="Hammon N."/>
            <person name="Israni S."/>
            <person name="Dalin E."/>
            <person name="Tice H."/>
            <person name="Pitluck S."/>
            <person name="Brettin T."/>
            <person name="Bruce D."/>
            <person name="Han C."/>
            <person name="Tapia R."/>
            <person name="Gilna P."/>
            <person name="Kiss H."/>
            <person name="Schmutz J."/>
            <person name="Larimer F."/>
            <person name="Land M."/>
            <person name="Hauser L."/>
            <person name="Kyrpides N."/>
            <person name="Lykidis A."/>
            <person name="Richardson P."/>
        </authorList>
    </citation>
    <scope>NUCLEOTIDE SEQUENCE [LARGE SCALE GENOMIC DNA]</scope>
    <source>
        <strain>OS217 / ATCC BAA-1090 / DSM 15013</strain>
    </source>
</reference>
<gene>
    <name evidence="1" type="primary">rplP</name>
    <name type="ordered locus">Sden_0177</name>
</gene>
<comment type="function">
    <text evidence="1">Binds 23S rRNA and is also seen to make contacts with the A and possibly P site tRNAs.</text>
</comment>
<comment type="subunit">
    <text evidence="1">Part of the 50S ribosomal subunit.</text>
</comment>
<comment type="similarity">
    <text evidence="1">Belongs to the universal ribosomal protein uL16 family.</text>
</comment>
<name>RL16_SHEDO</name>
<sequence length="136" mass="15397">MLQPKRMKFRKMFKGRNRGLANGTEVSFGTFGLKAVGRGRLTARQIESARRAMTRHVKRQGQIWIRVFPDKPITSKPLEVRMGKGKGNVEYWVCQIQPGKVLYEMDGVPESLAREAFALASAKLPIKTTFVTKTVM</sequence>
<dbReference type="EMBL" id="CP000302">
    <property type="protein sequence ID" value="ABE53474.1"/>
    <property type="molecule type" value="Genomic_DNA"/>
</dbReference>
<dbReference type="RefSeq" id="WP_011494641.1">
    <property type="nucleotide sequence ID" value="NC_007954.1"/>
</dbReference>
<dbReference type="SMR" id="Q12SV2"/>
<dbReference type="STRING" id="318161.Sden_0177"/>
<dbReference type="KEGG" id="sdn:Sden_0177"/>
<dbReference type="eggNOG" id="COG0197">
    <property type="taxonomic scope" value="Bacteria"/>
</dbReference>
<dbReference type="HOGENOM" id="CLU_078858_2_1_6"/>
<dbReference type="OrthoDB" id="9802589at2"/>
<dbReference type="Proteomes" id="UP000001982">
    <property type="component" value="Chromosome"/>
</dbReference>
<dbReference type="GO" id="GO:0022625">
    <property type="term" value="C:cytosolic large ribosomal subunit"/>
    <property type="evidence" value="ECO:0007669"/>
    <property type="project" value="TreeGrafter"/>
</dbReference>
<dbReference type="GO" id="GO:0019843">
    <property type="term" value="F:rRNA binding"/>
    <property type="evidence" value="ECO:0007669"/>
    <property type="project" value="UniProtKB-UniRule"/>
</dbReference>
<dbReference type="GO" id="GO:0003735">
    <property type="term" value="F:structural constituent of ribosome"/>
    <property type="evidence" value="ECO:0007669"/>
    <property type="project" value="InterPro"/>
</dbReference>
<dbReference type="GO" id="GO:0000049">
    <property type="term" value="F:tRNA binding"/>
    <property type="evidence" value="ECO:0007669"/>
    <property type="project" value="UniProtKB-KW"/>
</dbReference>
<dbReference type="GO" id="GO:0006412">
    <property type="term" value="P:translation"/>
    <property type="evidence" value="ECO:0007669"/>
    <property type="project" value="UniProtKB-UniRule"/>
</dbReference>
<dbReference type="CDD" id="cd01433">
    <property type="entry name" value="Ribosomal_L16_L10e"/>
    <property type="match status" value="1"/>
</dbReference>
<dbReference type="FunFam" id="3.90.1170.10:FF:000001">
    <property type="entry name" value="50S ribosomal protein L16"/>
    <property type="match status" value="1"/>
</dbReference>
<dbReference type="Gene3D" id="3.90.1170.10">
    <property type="entry name" value="Ribosomal protein L10e/L16"/>
    <property type="match status" value="1"/>
</dbReference>
<dbReference type="HAMAP" id="MF_01342">
    <property type="entry name" value="Ribosomal_uL16"/>
    <property type="match status" value="1"/>
</dbReference>
<dbReference type="InterPro" id="IPR047873">
    <property type="entry name" value="Ribosomal_uL16"/>
</dbReference>
<dbReference type="InterPro" id="IPR000114">
    <property type="entry name" value="Ribosomal_uL16_bact-type"/>
</dbReference>
<dbReference type="InterPro" id="IPR020798">
    <property type="entry name" value="Ribosomal_uL16_CS"/>
</dbReference>
<dbReference type="InterPro" id="IPR016180">
    <property type="entry name" value="Ribosomal_uL16_dom"/>
</dbReference>
<dbReference type="InterPro" id="IPR036920">
    <property type="entry name" value="Ribosomal_uL16_sf"/>
</dbReference>
<dbReference type="NCBIfam" id="TIGR01164">
    <property type="entry name" value="rplP_bact"/>
    <property type="match status" value="1"/>
</dbReference>
<dbReference type="PANTHER" id="PTHR12220">
    <property type="entry name" value="50S/60S RIBOSOMAL PROTEIN L16"/>
    <property type="match status" value="1"/>
</dbReference>
<dbReference type="PANTHER" id="PTHR12220:SF13">
    <property type="entry name" value="LARGE RIBOSOMAL SUBUNIT PROTEIN UL16M"/>
    <property type="match status" value="1"/>
</dbReference>
<dbReference type="Pfam" id="PF00252">
    <property type="entry name" value="Ribosomal_L16"/>
    <property type="match status" value="1"/>
</dbReference>
<dbReference type="PRINTS" id="PR00060">
    <property type="entry name" value="RIBOSOMALL16"/>
</dbReference>
<dbReference type="SUPFAM" id="SSF54686">
    <property type="entry name" value="Ribosomal protein L16p/L10e"/>
    <property type="match status" value="1"/>
</dbReference>
<dbReference type="PROSITE" id="PS00586">
    <property type="entry name" value="RIBOSOMAL_L16_1"/>
    <property type="match status" value="1"/>
</dbReference>
<dbReference type="PROSITE" id="PS00701">
    <property type="entry name" value="RIBOSOMAL_L16_2"/>
    <property type="match status" value="1"/>
</dbReference>
<protein>
    <recommendedName>
        <fullName evidence="1">Large ribosomal subunit protein uL16</fullName>
    </recommendedName>
    <alternativeName>
        <fullName evidence="2">50S ribosomal protein L16</fullName>
    </alternativeName>
</protein>
<proteinExistence type="inferred from homology"/>
<keyword id="KW-1185">Reference proteome</keyword>
<keyword id="KW-0687">Ribonucleoprotein</keyword>
<keyword id="KW-0689">Ribosomal protein</keyword>
<keyword id="KW-0694">RNA-binding</keyword>
<keyword id="KW-0699">rRNA-binding</keyword>
<keyword id="KW-0820">tRNA-binding</keyword>
<feature type="chain" id="PRO_1000054701" description="Large ribosomal subunit protein uL16">
    <location>
        <begin position="1"/>
        <end position="136"/>
    </location>
</feature>
<accession>Q12SV2</accession>